<keyword id="KW-0665">Pyrimidine biosynthesis</keyword>
<keyword id="KW-1185">Reference proteome</keyword>
<keyword id="KW-0808">Transferase</keyword>
<protein>
    <recommendedName>
        <fullName evidence="1">Aspartate carbamoyltransferase catalytic subunit</fullName>
        <ecNumber evidence="1">2.1.3.2</ecNumber>
    </recommendedName>
    <alternativeName>
        <fullName evidence="1">Aspartate transcarbamylase</fullName>
        <shortName evidence="1">ATCase</shortName>
    </alternativeName>
</protein>
<name>PYRB_HELPY</name>
<organism>
    <name type="scientific">Helicobacter pylori (strain ATCC 700392 / 26695)</name>
    <name type="common">Campylobacter pylori</name>
    <dbReference type="NCBI Taxonomy" id="85962"/>
    <lineage>
        <taxon>Bacteria</taxon>
        <taxon>Pseudomonadati</taxon>
        <taxon>Campylobacterota</taxon>
        <taxon>Epsilonproteobacteria</taxon>
        <taxon>Campylobacterales</taxon>
        <taxon>Helicobacteraceae</taxon>
        <taxon>Helicobacter</taxon>
    </lineage>
</organism>
<feature type="chain" id="PRO_0000113141" description="Aspartate carbamoyltransferase catalytic subunit">
    <location>
        <begin position="1"/>
        <end position="307"/>
    </location>
</feature>
<feature type="binding site" evidence="1">
    <location>
        <position position="59"/>
    </location>
    <ligand>
        <name>carbamoyl phosphate</name>
        <dbReference type="ChEBI" id="CHEBI:58228"/>
    </ligand>
</feature>
<feature type="binding site" evidence="1">
    <location>
        <position position="60"/>
    </location>
    <ligand>
        <name>carbamoyl phosphate</name>
        <dbReference type="ChEBI" id="CHEBI:58228"/>
    </ligand>
</feature>
<feature type="binding site" evidence="1">
    <location>
        <position position="87"/>
    </location>
    <ligand>
        <name>L-aspartate</name>
        <dbReference type="ChEBI" id="CHEBI:29991"/>
    </ligand>
</feature>
<feature type="binding site" evidence="1">
    <location>
        <position position="109"/>
    </location>
    <ligand>
        <name>carbamoyl phosphate</name>
        <dbReference type="ChEBI" id="CHEBI:58228"/>
    </ligand>
</feature>
<feature type="binding site" evidence="1">
    <location>
        <position position="137"/>
    </location>
    <ligand>
        <name>carbamoyl phosphate</name>
        <dbReference type="ChEBI" id="CHEBI:58228"/>
    </ligand>
</feature>
<feature type="binding site" evidence="1">
    <location>
        <position position="140"/>
    </location>
    <ligand>
        <name>carbamoyl phosphate</name>
        <dbReference type="ChEBI" id="CHEBI:58228"/>
    </ligand>
</feature>
<feature type="binding site" evidence="1">
    <location>
        <position position="173"/>
    </location>
    <ligand>
        <name>L-aspartate</name>
        <dbReference type="ChEBI" id="CHEBI:29991"/>
    </ligand>
</feature>
<feature type="binding site" evidence="1">
    <location>
        <position position="223"/>
    </location>
    <ligand>
        <name>L-aspartate</name>
        <dbReference type="ChEBI" id="CHEBI:29991"/>
    </ligand>
</feature>
<feature type="binding site" evidence="1">
    <location>
        <position position="266"/>
    </location>
    <ligand>
        <name>carbamoyl phosphate</name>
        <dbReference type="ChEBI" id="CHEBI:58228"/>
    </ligand>
</feature>
<feature type="binding site" evidence="1">
    <location>
        <position position="267"/>
    </location>
    <ligand>
        <name>carbamoyl phosphate</name>
        <dbReference type="ChEBI" id="CHEBI:58228"/>
    </ligand>
</feature>
<proteinExistence type="inferred from homology"/>
<evidence type="ECO:0000255" key="1">
    <source>
        <dbReference type="HAMAP-Rule" id="MF_00001"/>
    </source>
</evidence>
<evidence type="ECO:0000305" key="2"/>
<dbReference type="EC" id="2.1.3.2" evidence="1"/>
<dbReference type="EMBL" id="AE000511">
    <property type="protein sequence ID" value="AAD08128.1"/>
    <property type="molecule type" value="Genomic_DNA"/>
</dbReference>
<dbReference type="PIR" id="D64655">
    <property type="entry name" value="D64655"/>
</dbReference>
<dbReference type="RefSeq" id="NP_207875.1">
    <property type="nucleotide sequence ID" value="NC_000915.1"/>
</dbReference>
<dbReference type="RefSeq" id="WP_001124546.1">
    <property type="nucleotide sequence ID" value="NC_018939.1"/>
</dbReference>
<dbReference type="SMR" id="O25716"/>
<dbReference type="DIP" id="DIP-3378N"/>
<dbReference type="FunCoup" id="O25716">
    <property type="interactions" value="392"/>
</dbReference>
<dbReference type="IntAct" id="O25716">
    <property type="interactions" value="3"/>
</dbReference>
<dbReference type="MINT" id="O25716"/>
<dbReference type="STRING" id="85962.HP_1084"/>
<dbReference type="PaxDb" id="85962-C694_05600"/>
<dbReference type="EnsemblBacteria" id="AAD08128">
    <property type="protein sequence ID" value="AAD08128"/>
    <property type="gene ID" value="HP_1084"/>
</dbReference>
<dbReference type="KEGG" id="heo:C694_05600"/>
<dbReference type="KEGG" id="hpy:HP_1084"/>
<dbReference type="PATRIC" id="fig|85962.47.peg.1163"/>
<dbReference type="eggNOG" id="COG0540">
    <property type="taxonomic scope" value="Bacteria"/>
</dbReference>
<dbReference type="InParanoid" id="O25716"/>
<dbReference type="OrthoDB" id="9774690at2"/>
<dbReference type="PhylomeDB" id="O25716"/>
<dbReference type="UniPathway" id="UPA00070">
    <property type="reaction ID" value="UER00116"/>
</dbReference>
<dbReference type="Proteomes" id="UP000000429">
    <property type="component" value="Chromosome"/>
</dbReference>
<dbReference type="GO" id="GO:0016597">
    <property type="term" value="F:amino acid binding"/>
    <property type="evidence" value="ECO:0007669"/>
    <property type="project" value="InterPro"/>
</dbReference>
<dbReference type="GO" id="GO:0004070">
    <property type="term" value="F:aspartate carbamoyltransferase activity"/>
    <property type="evidence" value="ECO:0007669"/>
    <property type="project" value="UniProtKB-UniRule"/>
</dbReference>
<dbReference type="GO" id="GO:0006207">
    <property type="term" value="P:'de novo' pyrimidine nucleobase biosynthetic process"/>
    <property type="evidence" value="ECO:0007669"/>
    <property type="project" value="InterPro"/>
</dbReference>
<dbReference type="GO" id="GO:0044205">
    <property type="term" value="P:'de novo' UMP biosynthetic process"/>
    <property type="evidence" value="ECO:0007669"/>
    <property type="project" value="UniProtKB-UniRule"/>
</dbReference>
<dbReference type="GO" id="GO:0006520">
    <property type="term" value="P:amino acid metabolic process"/>
    <property type="evidence" value="ECO:0007669"/>
    <property type="project" value="InterPro"/>
</dbReference>
<dbReference type="FunFam" id="3.40.50.1370:FF:000037">
    <property type="entry name" value="Aspartate carbamoyltransferase"/>
    <property type="match status" value="1"/>
</dbReference>
<dbReference type="Gene3D" id="3.40.50.1370">
    <property type="entry name" value="Aspartate/ornithine carbamoyltransferase"/>
    <property type="match status" value="2"/>
</dbReference>
<dbReference type="HAMAP" id="MF_00001">
    <property type="entry name" value="Asp_carb_tr"/>
    <property type="match status" value="1"/>
</dbReference>
<dbReference type="InterPro" id="IPR006132">
    <property type="entry name" value="Asp/Orn_carbamoyltranf_P-bd"/>
</dbReference>
<dbReference type="InterPro" id="IPR006130">
    <property type="entry name" value="Asp/Orn_carbamoylTrfase"/>
</dbReference>
<dbReference type="InterPro" id="IPR036901">
    <property type="entry name" value="Asp/Orn_carbamoylTrfase_sf"/>
</dbReference>
<dbReference type="InterPro" id="IPR002082">
    <property type="entry name" value="Asp_carbamoyltransf"/>
</dbReference>
<dbReference type="InterPro" id="IPR006131">
    <property type="entry name" value="Asp_carbamoyltransf_Asp/Orn-bd"/>
</dbReference>
<dbReference type="NCBIfam" id="TIGR00670">
    <property type="entry name" value="asp_carb_tr"/>
    <property type="match status" value="1"/>
</dbReference>
<dbReference type="NCBIfam" id="NF002032">
    <property type="entry name" value="PRK00856.1"/>
    <property type="match status" value="1"/>
</dbReference>
<dbReference type="PANTHER" id="PTHR45753:SF6">
    <property type="entry name" value="ASPARTATE CARBAMOYLTRANSFERASE"/>
    <property type="match status" value="1"/>
</dbReference>
<dbReference type="PANTHER" id="PTHR45753">
    <property type="entry name" value="ORNITHINE CARBAMOYLTRANSFERASE, MITOCHONDRIAL"/>
    <property type="match status" value="1"/>
</dbReference>
<dbReference type="Pfam" id="PF00185">
    <property type="entry name" value="OTCace"/>
    <property type="match status" value="1"/>
</dbReference>
<dbReference type="Pfam" id="PF02729">
    <property type="entry name" value="OTCace_N"/>
    <property type="match status" value="1"/>
</dbReference>
<dbReference type="PRINTS" id="PR00100">
    <property type="entry name" value="AOTCASE"/>
</dbReference>
<dbReference type="PRINTS" id="PR00101">
    <property type="entry name" value="ATCASE"/>
</dbReference>
<dbReference type="SUPFAM" id="SSF53671">
    <property type="entry name" value="Aspartate/ornithine carbamoyltransferase"/>
    <property type="match status" value="1"/>
</dbReference>
<dbReference type="PROSITE" id="PS00097">
    <property type="entry name" value="CARBAMOYLTRANSFERASE"/>
    <property type="match status" value="1"/>
</dbReference>
<accession>O25716</accession>
<reference key="1">
    <citation type="journal article" date="1997" name="Nature">
        <title>The complete genome sequence of the gastric pathogen Helicobacter pylori.</title>
        <authorList>
            <person name="Tomb J.-F."/>
            <person name="White O."/>
            <person name="Kerlavage A.R."/>
            <person name="Clayton R.A."/>
            <person name="Sutton G.G."/>
            <person name="Fleischmann R.D."/>
            <person name="Ketchum K.A."/>
            <person name="Klenk H.-P."/>
            <person name="Gill S.R."/>
            <person name="Dougherty B.A."/>
            <person name="Nelson K.E."/>
            <person name="Quackenbush J."/>
            <person name="Zhou L."/>
            <person name="Kirkness E.F."/>
            <person name="Peterson S.N."/>
            <person name="Loftus B.J."/>
            <person name="Richardson D.L."/>
            <person name="Dodson R.J."/>
            <person name="Khalak H.G."/>
            <person name="Glodek A."/>
            <person name="McKenney K."/>
            <person name="FitzGerald L.M."/>
            <person name="Lee N."/>
            <person name="Adams M.D."/>
            <person name="Hickey E.K."/>
            <person name="Berg D.E."/>
            <person name="Gocayne J.D."/>
            <person name="Utterback T.R."/>
            <person name="Peterson J.D."/>
            <person name="Kelley J.M."/>
            <person name="Cotton M.D."/>
            <person name="Weidman J.F."/>
            <person name="Fujii C."/>
            <person name="Bowman C."/>
            <person name="Watthey L."/>
            <person name="Wallin E."/>
            <person name="Hayes W.S."/>
            <person name="Borodovsky M."/>
            <person name="Karp P.D."/>
            <person name="Smith H.O."/>
            <person name="Fraser C.M."/>
            <person name="Venter J.C."/>
        </authorList>
    </citation>
    <scope>NUCLEOTIDE SEQUENCE [LARGE SCALE GENOMIC DNA]</scope>
    <source>
        <strain>ATCC 700392 / 26695</strain>
    </source>
</reference>
<comment type="function">
    <text evidence="1">Catalyzes the condensation of carbamoyl phosphate and aspartate to form carbamoyl aspartate and inorganic phosphate, the committed step in the de novo pyrimidine nucleotide biosynthesis pathway.</text>
</comment>
<comment type="catalytic activity">
    <reaction evidence="1">
        <text>carbamoyl phosphate + L-aspartate = N-carbamoyl-L-aspartate + phosphate + H(+)</text>
        <dbReference type="Rhea" id="RHEA:20013"/>
        <dbReference type="ChEBI" id="CHEBI:15378"/>
        <dbReference type="ChEBI" id="CHEBI:29991"/>
        <dbReference type="ChEBI" id="CHEBI:32814"/>
        <dbReference type="ChEBI" id="CHEBI:43474"/>
        <dbReference type="ChEBI" id="CHEBI:58228"/>
        <dbReference type="EC" id="2.1.3.2"/>
    </reaction>
</comment>
<comment type="pathway">
    <text evidence="1">Pyrimidine metabolism; UMP biosynthesis via de novo pathway; (S)-dihydroorotate from bicarbonate: step 2/3.</text>
</comment>
<comment type="subunit">
    <text evidence="1">Heterododecamer (2C3:3R2) of six catalytic PyrB chains organized as two trimers (C3), and six regulatory PyrI chains organized as three dimers (R2).</text>
</comment>
<comment type="similarity">
    <text evidence="1 2">Belongs to the aspartate/ornithine carbamoyltransferase superfamily. ATCase family.</text>
</comment>
<sequence length="307" mass="34068">MPKKCRHLLQTSDLSLDEIKLLLEKASVYANDFNAVSLETKEKMHNKIIVALFFENSTRTVSSFEIASLRLGAKIVKLNMQTSSASKGETLTDTFKNIHAMQPDAIITRHAFSSAPFKLAEFSQCPLINAGSGVSAHPTQALLDLLTLYQHFGSLENLKGKKIAFIGDVKNSRVANSNIKLLQRLGLEIMLCAPSSMLPSVSLKTTHNVEEAIAFADILMSLRTQTERHNTPIFASLKDYGNAYCITQQRLKAHAKNKEVIILHPGPVHRDIDIESAVLEDERSKVLEQVKNGVAMRMAVLEFLLLD</sequence>
<gene>
    <name evidence="1" type="primary">pyrB</name>
    <name type="ordered locus">HP_1084</name>
</gene>